<dbReference type="EC" id="1.1.1.94" evidence="1"/>
<dbReference type="EMBL" id="CP001649">
    <property type="protein sequence ID" value="ACS78814.1"/>
    <property type="molecule type" value="Genomic_DNA"/>
</dbReference>
<dbReference type="RefSeq" id="WP_015850633.1">
    <property type="nucleotide sequence ID" value="NC_012881.1"/>
</dbReference>
<dbReference type="SMR" id="C6BYZ0"/>
<dbReference type="STRING" id="526222.Desal_0748"/>
<dbReference type="KEGG" id="dsa:Desal_0748"/>
<dbReference type="eggNOG" id="COG0240">
    <property type="taxonomic scope" value="Bacteria"/>
</dbReference>
<dbReference type="HOGENOM" id="CLU_033449_0_2_7"/>
<dbReference type="OrthoDB" id="9812273at2"/>
<dbReference type="UniPathway" id="UPA00940"/>
<dbReference type="Proteomes" id="UP000002601">
    <property type="component" value="Chromosome"/>
</dbReference>
<dbReference type="GO" id="GO:0005829">
    <property type="term" value="C:cytosol"/>
    <property type="evidence" value="ECO:0007669"/>
    <property type="project" value="TreeGrafter"/>
</dbReference>
<dbReference type="GO" id="GO:0047952">
    <property type="term" value="F:glycerol-3-phosphate dehydrogenase [NAD(P)+] activity"/>
    <property type="evidence" value="ECO:0007669"/>
    <property type="project" value="UniProtKB-UniRule"/>
</dbReference>
<dbReference type="GO" id="GO:0051287">
    <property type="term" value="F:NAD binding"/>
    <property type="evidence" value="ECO:0007669"/>
    <property type="project" value="InterPro"/>
</dbReference>
<dbReference type="GO" id="GO:0005975">
    <property type="term" value="P:carbohydrate metabolic process"/>
    <property type="evidence" value="ECO:0007669"/>
    <property type="project" value="InterPro"/>
</dbReference>
<dbReference type="GO" id="GO:0046167">
    <property type="term" value="P:glycerol-3-phosphate biosynthetic process"/>
    <property type="evidence" value="ECO:0007669"/>
    <property type="project" value="UniProtKB-UniRule"/>
</dbReference>
<dbReference type="GO" id="GO:0046168">
    <property type="term" value="P:glycerol-3-phosphate catabolic process"/>
    <property type="evidence" value="ECO:0007669"/>
    <property type="project" value="InterPro"/>
</dbReference>
<dbReference type="GO" id="GO:0006650">
    <property type="term" value="P:glycerophospholipid metabolic process"/>
    <property type="evidence" value="ECO:0007669"/>
    <property type="project" value="UniProtKB-UniRule"/>
</dbReference>
<dbReference type="GO" id="GO:0008654">
    <property type="term" value="P:phospholipid biosynthetic process"/>
    <property type="evidence" value="ECO:0007669"/>
    <property type="project" value="UniProtKB-KW"/>
</dbReference>
<dbReference type="FunFam" id="1.10.1040.10:FF:000001">
    <property type="entry name" value="Glycerol-3-phosphate dehydrogenase [NAD(P)+]"/>
    <property type="match status" value="1"/>
</dbReference>
<dbReference type="FunFam" id="3.40.50.720:FF:000019">
    <property type="entry name" value="Glycerol-3-phosphate dehydrogenase [NAD(P)+]"/>
    <property type="match status" value="1"/>
</dbReference>
<dbReference type="Gene3D" id="1.10.1040.10">
    <property type="entry name" value="N-(1-d-carboxylethyl)-l-norvaline Dehydrogenase, domain 2"/>
    <property type="match status" value="1"/>
</dbReference>
<dbReference type="Gene3D" id="3.40.50.720">
    <property type="entry name" value="NAD(P)-binding Rossmann-like Domain"/>
    <property type="match status" value="1"/>
</dbReference>
<dbReference type="HAMAP" id="MF_00394">
    <property type="entry name" value="NAD_Glyc3P_dehydrog"/>
    <property type="match status" value="1"/>
</dbReference>
<dbReference type="InterPro" id="IPR008927">
    <property type="entry name" value="6-PGluconate_DH-like_C_sf"/>
</dbReference>
<dbReference type="InterPro" id="IPR013328">
    <property type="entry name" value="6PGD_dom2"/>
</dbReference>
<dbReference type="InterPro" id="IPR006168">
    <property type="entry name" value="G3P_DH_NAD-dep"/>
</dbReference>
<dbReference type="InterPro" id="IPR006109">
    <property type="entry name" value="G3P_DH_NAD-dep_C"/>
</dbReference>
<dbReference type="InterPro" id="IPR011128">
    <property type="entry name" value="G3P_DH_NAD-dep_N"/>
</dbReference>
<dbReference type="InterPro" id="IPR036291">
    <property type="entry name" value="NAD(P)-bd_dom_sf"/>
</dbReference>
<dbReference type="NCBIfam" id="NF000940">
    <property type="entry name" value="PRK00094.1-2"/>
    <property type="match status" value="1"/>
</dbReference>
<dbReference type="NCBIfam" id="NF000942">
    <property type="entry name" value="PRK00094.1-4"/>
    <property type="match status" value="1"/>
</dbReference>
<dbReference type="PANTHER" id="PTHR11728">
    <property type="entry name" value="GLYCEROL-3-PHOSPHATE DEHYDROGENASE"/>
    <property type="match status" value="1"/>
</dbReference>
<dbReference type="PANTHER" id="PTHR11728:SF1">
    <property type="entry name" value="GLYCEROL-3-PHOSPHATE DEHYDROGENASE [NAD(+)] 2, CHLOROPLASTIC"/>
    <property type="match status" value="1"/>
</dbReference>
<dbReference type="Pfam" id="PF07479">
    <property type="entry name" value="NAD_Gly3P_dh_C"/>
    <property type="match status" value="1"/>
</dbReference>
<dbReference type="Pfam" id="PF01210">
    <property type="entry name" value="NAD_Gly3P_dh_N"/>
    <property type="match status" value="1"/>
</dbReference>
<dbReference type="PIRSF" id="PIRSF000114">
    <property type="entry name" value="Glycerol-3-P_dh"/>
    <property type="match status" value="1"/>
</dbReference>
<dbReference type="PRINTS" id="PR00077">
    <property type="entry name" value="GPDHDRGNASE"/>
</dbReference>
<dbReference type="SUPFAM" id="SSF48179">
    <property type="entry name" value="6-phosphogluconate dehydrogenase C-terminal domain-like"/>
    <property type="match status" value="1"/>
</dbReference>
<dbReference type="SUPFAM" id="SSF51735">
    <property type="entry name" value="NAD(P)-binding Rossmann-fold domains"/>
    <property type="match status" value="1"/>
</dbReference>
<dbReference type="PROSITE" id="PS00957">
    <property type="entry name" value="NAD_G3PDH"/>
    <property type="match status" value="1"/>
</dbReference>
<comment type="function">
    <text evidence="1">Catalyzes the reduction of the glycolytic intermediate dihydroxyacetone phosphate (DHAP) to sn-glycerol 3-phosphate (G3P), the key precursor for phospholipid synthesis.</text>
</comment>
<comment type="catalytic activity">
    <reaction evidence="1">
        <text>sn-glycerol 3-phosphate + NAD(+) = dihydroxyacetone phosphate + NADH + H(+)</text>
        <dbReference type="Rhea" id="RHEA:11092"/>
        <dbReference type="ChEBI" id="CHEBI:15378"/>
        <dbReference type="ChEBI" id="CHEBI:57540"/>
        <dbReference type="ChEBI" id="CHEBI:57597"/>
        <dbReference type="ChEBI" id="CHEBI:57642"/>
        <dbReference type="ChEBI" id="CHEBI:57945"/>
        <dbReference type="EC" id="1.1.1.94"/>
    </reaction>
    <physiologicalReaction direction="right-to-left" evidence="1">
        <dbReference type="Rhea" id="RHEA:11094"/>
    </physiologicalReaction>
</comment>
<comment type="catalytic activity">
    <reaction evidence="1">
        <text>sn-glycerol 3-phosphate + NADP(+) = dihydroxyacetone phosphate + NADPH + H(+)</text>
        <dbReference type="Rhea" id="RHEA:11096"/>
        <dbReference type="ChEBI" id="CHEBI:15378"/>
        <dbReference type="ChEBI" id="CHEBI:57597"/>
        <dbReference type="ChEBI" id="CHEBI:57642"/>
        <dbReference type="ChEBI" id="CHEBI:57783"/>
        <dbReference type="ChEBI" id="CHEBI:58349"/>
        <dbReference type="EC" id="1.1.1.94"/>
    </reaction>
    <physiologicalReaction direction="right-to-left" evidence="1">
        <dbReference type="Rhea" id="RHEA:11098"/>
    </physiologicalReaction>
</comment>
<comment type="pathway">
    <text evidence="1">Membrane lipid metabolism; glycerophospholipid metabolism.</text>
</comment>
<comment type="subcellular location">
    <subcellularLocation>
        <location evidence="1">Cytoplasm</location>
    </subcellularLocation>
</comment>
<comment type="similarity">
    <text evidence="1">Belongs to the NAD-dependent glycerol-3-phosphate dehydrogenase family.</text>
</comment>
<protein>
    <recommendedName>
        <fullName evidence="1">Glycerol-3-phosphate dehydrogenase [NAD(P)+]</fullName>
        <ecNumber evidence="1">1.1.1.94</ecNumber>
    </recommendedName>
    <alternativeName>
        <fullName evidence="1">NAD(P)(+)-dependent glycerol-3-phosphate dehydrogenase</fullName>
    </alternativeName>
    <alternativeName>
        <fullName evidence="1">NAD(P)H-dependent dihydroxyacetone-phosphate reductase</fullName>
    </alternativeName>
</protein>
<gene>
    <name evidence="1" type="primary">gpsA</name>
    <name type="ordered locus">Desal_0748</name>
</gene>
<name>GPDA_MARSD</name>
<feature type="chain" id="PRO_1000205855" description="Glycerol-3-phosphate dehydrogenase [NAD(P)+]">
    <location>
        <begin position="1"/>
        <end position="329"/>
    </location>
</feature>
<feature type="active site" description="Proton acceptor" evidence="1">
    <location>
        <position position="190"/>
    </location>
</feature>
<feature type="binding site" evidence="1">
    <location>
        <position position="11"/>
    </location>
    <ligand>
        <name>NADPH</name>
        <dbReference type="ChEBI" id="CHEBI:57783"/>
    </ligand>
</feature>
<feature type="binding site" evidence="1">
    <location>
        <position position="31"/>
    </location>
    <ligand>
        <name>NADPH</name>
        <dbReference type="ChEBI" id="CHEBI:57783"/>
    </ligand>
</feature>
<feature type="binding site" evidence="1">
    <location>
        <position position="105"/>
    </location>
    <ligand>
        <name>NADPH</name>
        <dbReference type="ChEBI" id="CHEBI:57783"/>
    </ligand>
</feature>
<feature type="binding site" evidence="1">
    <location>
        <position position="105"/>
    </location>
    <ligand>
        <name>sn-glycerol 3-phosphate</name>
        <dbReference type="ChEBI" id="CHEBI:57597"/>
    </ligand>
</feature>
<feature type="binding site" evidence="1">
    <location>
        <position position="135"/>
    </location>
    <ligand>
        <name>sn-glycerol 3-phosphate</name>
        <dbReference type="ChEBI" id="CHEBI:57597"/>
    </ligand>
</feature>
<feature type="binding site" evidence="1">
    <location>
        <position position="137"/>
    </location>
    <ligand>
        <name>sn-glycerol 3-phosphate</name>
        <dbReference type="ChEBI" id="CHEBI:57597"/>
    </ligand>
</feature>
<feature type="binding site" evidence="1">
    <location>
        <position position="139"/>
    </location>
    <ligand>
        <name>NADPH</name>
        <dbReference type="ChEBI" id="CHEBI:57783"/>
    </ligand>
</feature>
<feature type="binding site" evidence="1">
    <location>
        <position position="190"/>
    </location>
    <ligand>
        <name>sn-glycerol 3-phosphate</name>
        <dbReference type="ChEBI" id="CHEBI:57597"/>
    </ligand>
</feature>
<feature type="binding site" evidence="1">
    <location>
        <position position="243"/>
    </location>
    <ligand>
        <name>sn-glycerol 3-phosphate</name>
        <dbReference type="ChEBI" id="CHEBI:57597"/>
    </ligand>
</feature>
<feature type="binding site" evidence="1">
    <location>
        <position position="253"/>
    </location>
    <ligand>
        <name>sn-glycerol 3-phosphate</name>
        <dbReference type="ChEBI" id="CHEBI:57597"/>
    </ligand>
</feature>
<feature type="binding site" evidence="1">
    <location>
        <position position="254"/>
    </location>
    <ligand>
        <name>NADPH</name>
        <dbReference type="ChEBI" id="CHEBI:57783"/>
    </ligand>
</feature>
<feature type="binding site" evidence="1">
    <location>
        <position position="254"/>
    </location>
    <ligand>
        <name>sn-glycerol 3-phosphate</name>
        <dbReference type="ChEBI" id="CHEBI:57597"/>
    </ligand>
</feature>
<feature type="binding site" evidence="1">
    <location>
        <position position="255"/>
    </location>
    <ligand>
        <name>sn-glycerol 3-phosphate</name>
        <dbReference type="ChEBI" id="CHEBI:57597"/>
    </ligand>
</feature>
<feature type="binding site" evidence="1">
    <location>
        <position position="277"/>
    </location>
    <ligand>
        <name>NADPH</name>
        <dbReference type="ChEBI" id="CHEBI:57783"/>
    </ligand>
</feature>
<feature type="binding site" evidence="1">
    <location>
        <position position="279"/>
    </location>
    <ligand>
        <name>NADPH</name>
        <dbReference type="ChEBI" id="CHEBI:57783"/>
    </ligand>
</feature>
<keyword id="KW-0963">Cytoplasm</keyword>
<keyword id="KW-0444">Lipid biosynthesis</keyword>
<keyword id="KW-0443">Lipid metabolism</keyword>
<keyword id="KW-0520">NAD</keyword>
<keyword id="KW-0521">NADP</keyword>
<keyword id="KW-0547">Nucleotide-binding</keyword>
<keyword id="KW-0560">Oxidoreductase</keyword>
<keyword id="KW-0594">Phospholipid biosynthesis</keyword>
<keyword id="KW-1208">Phospholipid metabolism</keyword>
<keyword id="KW-1185">Reference proteome</keyword>
<organism>
    <name type="scientific">Maridesulfovibrio salexigens (strain ATCC 14822 / DSM 2638 / NCIMB 8403 / VKM B-1763)</name>
    <name type="common">Desulfovibrio salexigens</name>
    <dbReference type="NCBI Taxonomy" id="526222"/>
    <lineage>
        <taxon>Bacteria</taxon>
        <taxon>Pseudomonadati</taxon>
        <taxon>Thermodesulfobacteriota</taxon>
        <taxon>Desulfovibrionia</taxon>
        <taxon>Desulfovibrionales</taxon>
        <taxon>Desulfovibrionaceae</taxon>
        <taxon>Maridesulfovibrio</taxon>
    </lineage>
</organism>
<sequence>MKIAVIGAGAWGTTLANTLAKKGHNTHLWVREQELCDEITNTGYNSVFLPDFKLSPDLKCSSNPQQVMEGADYFLLVVPSQFLRSALADMKQYFPQNPAVVCASKGIELNTGAPMSQVVFESLEGLNPRFAHLSGPTFAYELSAELPTSIVLGCGDEKLAAEVQDIFSTPYLRIYTNPDYRGVELGGAIKNIMAIAAGMADGLKFGHNTRAALITRGIAEMSRLGEAMGAQASTFMGLSGMGDLVLTCTGDLSRNRQVGLKLGQGMKLNEILKMRMVAEGVKTTESVYFLAKKLGVELPITEQVYKILYEDKDPATAVCDLMNRDLKAE</sequence>
<accession>C6BYZ0</accession>
<reference key="1">
    <citation type="submission" date="2009-06" db="EMBL/GenBank/DDBJ databases">
        <title>Complete sequence of Desulfovibrio salexigens DSM 2638.</title>
        <authorList>
            <consortium name="US DOE Joint Genome Institute"/>
            <person name="Lucas S."/>
            <person name="Copeland A."/>
            <person name="Lapidus A."/>
            <person name="Glavina del Rio T."/>
            <person name="Tice H."/>
            <person name="Bruce D."/>
            <person name="Goodwin L."/>
            <person name="Pitluck S."/>
            <person name="Munk A.C."/>
            <person name="Brettin T."/>
            <person name="Detter J.C."/>
            <person name="Han C."/>
            <person name="Tapia R."/>
            <person name="Larimer F."/>
            <person name="Land M."/>
            <person name="Hauser L."/>
            <person name="Kyrpides N."/>
            <person name="Anderson I."/>
            <person name="Wall J.D."/>
            <person name="Arkin A.P."/>
            <person name="Dehal P."/>
            <person name="Chivian D."/>
            <person name="Giles B."/>
            <person name="Hazen T.C."/>
        </authorList>
    </citation>
    <scope>NUCLEOTIDE SEQUENCE [LARGE SCALE GENOMIC DNA]</scope>
    <source>
        <strain>ATCC 14822 / DSM 2638 / NCIMB 8403 / VKM B-1763</strain>
    </source>
</reference>
<proteinExistence type="inferred from homology"/>
<evidence type="ECO:0000255" key="1">
    <source>
        <dbReference type="HAMAP-Rule" id="MF_00394"/>
    </source>
</evidence>